<proteinExistence type="evidence at protein level"/>
<gene>
    <name evidence="4" type="primary">yscH</name>
    <name type="synonym">lcrP</name>
    <name evidence="4" type="synonym">yopR</name>
    <name type="ordered locus">YPCD1.57</name>
    <name type="ordered locus">y5021</name>
    <name type="ordered locus">y0024</name>
    <name type="ordered locus">YP_pCD26</name>
</gene>
<sequence length="165" mass="18348">MTVTLNRGSITSLMSSSQAVSTLQPVASELKTQLENKLKSESAEKTREVLWQQYYASNPPDHAVLEVLATPVREALLARFGQHQGSVVPAIDLPELRSVLQQFDSFGKRWEAILLQVLEGIKPNESQVGLPYLSELINKELMILLPSNSIVDSLLHNSHQIDMDT</sequence>
<accession>P68590</accession>
<accession>Q00929</accession>
<keyword id="KW-0002">3D-structure</keyword>
<keyword id="KW-0614">Plasmid</keyword>
<keyword id="KW-1185">Reference proteome</keyword>
<keyword id="KW-0964">Secreted</keyword>
<keyword id="KW-0843">Virulence</keyword>
<feature type="chain" id="PRO_0000066484" description="Type 3 secretion system regulator YopR">
    <location>
        <begin position="1"/>
        <end position="165"/>
    </location>
</feature>
<feature type="helix" evidence="7">
    <location>
        <begin position="43"/>
        <end position="56"/>
    </location>
</feature>
<feature type="helix" evidence="7">
    <location>
        <begin position="62"/>
        <end position="80"/>
    </location>
</feature>
<feature type="helix" evidence="7">
    <location>
        <begin position="89"/>
        <end position="103"/>
    </location>
</feature>
<feature type="helix" evidence="7">
    <location>
        <begin position="108"/>
        <end position="119"/>
    </location>
</feature>
<feature type="helix" evidence="7">
    <location>
        <begin position="131"/>
        <end position="144"/>
    </location>
</feature>
<name>YOPR_YERPE</name>
<organism>
    <name type="scientific">Yersinia pestis</name>
    <dbReference type="NCBI Taxonomy" id="632"/>
    <lineage>
        <taxon>Bacteria</taxon>
        <taxon>Pseudomonadati</taxon>
        <taxon>Pseudomonadota</taxon>
        <taxon>Gammaproteobacteria</taxon>
        <taxon>Enterobacterales</taxon>
        <taxon>Yersiniaceae</taxon>
        <taxon>Yersinia</taxon>
    </lineage>
</organism>
<geneLocation type="plasmid">
    <name>pCD1</name>
</geneLocation>
<protein>
    <recommendedName>
        <fullName evidence="5">Type 3 secretion system regulator YopR</fullName>
        <shortName evidence="5">T3SS regulator YopR</shortName>
    </recommendedName>
    <alternativeName>
        <fullName evidence="5">Yersinia outer protein R</fullName>
    </alternativeName>
    <alternativeName>
        <fullName evidence="5">Yersinia secretion protein H</fullName>
    </alternativeName>
</protein>
<evidence type="ECO:0000250" key="1">
    <source>
        <dbReference type="UniProtKB" id="Q01249"/>
    </source>
</evidence>
<evidence type="ECO:0000269" key="2">
    <source>
    </source>
</evidence>
<evidence type="ECO:0000269" key="3">
    <source>
    </source>
</evidence>
<evidence type="ECO:0000303" key="4">
    <source>
    </source>
</evidence>
<evidence type="ECO:0000305" key="5"/>
<evidence type="ECO:0007744" key="6">
    <source>
        <dbReference type="PDB" id="1Z21"/>
    </source>
</evidence>
<evidence type="ECO:0007829" key="7">
    <source>
        <dbReference type="PDB" id="1Z21"/>
    </source>
</evidence>
<dbReference type="EMBL" id="AF074612">
    <property type="protein sequence ID" value="AAC69828.1"/>
    <property type="molecule type" value="Genomic_DNA"/>
</dbReference>
<dbReference type="EMBL" id="AF053946">
    <property type="protein sequence ID" value="AAC62547.1"/>
    <property type="molecule type" value="Genomic_DNA"/>
</dbReference>
<dbReference type="EMBL" id="AL117189">
    <property type="protein sequence ID" value="CAB54934.1"/>
    <property type="molecule type" value="Genomic_DNA"/>
</dbReference>
<dbReference type="EMBL" id="AE017043">
    <property type="protein sequence ID" value="AAS58545.1"/>
    <property type="molecule type" value="Genomic_DNA"/>
</dbReference>
<dbReference type="PIR" id="T43568">
    <property type="entry name" value="T43568"/>
</dbReference>
<dbReference type="RefSeq" id="NP_395191.1">
    <property type="nucleotide sequence ID" value="NC_003131.1"/>
</dbReference>
<dbReference type="RefSeq" id="NP_857725.1">
    <property type="nucleotide sequence ID" value="NC_004836.1"/>
</dbReference>
<dbReference type="RefSeq" id="NP_857920.1">
    <property type="nucleotide sequence ID" value="NC_004839.1"/>
</dbReference>
<dbReference type="RefSeq" id="WP_002212915.1">
    <property type="nucleotide sequence ID" value="NZ_WUCM01000070.1"/>
</dbReference>
<dbReference type="PDB" id="1Z21">
    <property type="method" value="X-ray"/>
    <property type="resolution" value="1.50 A"/>
    <property type="chains" value="A=38-149"/>
</dbReference>
<dbReference type="PDBsum" id="1Z21"/>
<dbReference type="SMR" id="P68590"/>
<dbReference type="IntAct" id="P68590">
    <property type="interactions" value="7"/>
</dbReference>
<dbReference type="MINT" id="P68590"/>
<dbReference type="PaxDb" id="214092-5832477"/>
<dbReference type="DNASU" id="1149284"/>
<dbReference type="EnsemblBacteria" id="AAS58545">
    <property type="protein sequence ID" value="AAS58545"/>
    <property type="gene ID" value="YP_pCD26"/>
</dbReference>
<dbReference type="KEGG" id="ype:YPCD1.57"/>
<dbReference type="KEGG" id="ypm:YP_pCD26"/>
<dbReference type="PATRIC" id="fig|214092.21.peg.67"/>
<dbReference type="eggNOG" id="ENOG5033585">
    <property type="taxonomic scope" value="Bacteria"/>
</dbReference>
<dbReference type="HOGENOM" id="CLU_1610154_0_0_6"/>
<dbReference type="OMA" id="IPRNGMV"/>
<dbReference type="OrthoDB" id="6958154at2"/>
<dbReference type="EvolutionaryTrace" id="P68590"/>
<dbReference type="Proteomes" id="UP000000815">
    <property type="component" value="Plasmid pCD1"/>
</dbReference>
<dbReference type="Proteomes" id="UP000001019">
    <property type="component" value="Plasmid pCD1"/>
</dbReference>
<dbReference type="GO" id="GO:0005576">
    <property type="term" value="C:extracellular region"/>
    <property type="evidence" value="ECO:0007669"/>
    <property type="project" value="UniProtKB-SubCell"/>
</dbReference>
<dbReference type="GO" id="GO:0030257">
    <property type="term" value="C:type III protein secretion system complex"/>
    <property type="evidence" value="ECO:0007669"/>
    <property type="project" value="InterPro"/>
</dbReference>
<dbReference type="GO" id="GO:0030254">
    <property type="term" value="P:protein secretion by the type III secretion system"/>
    <property type="evidence" value="ECO:0007669"/>
    <property type="project" value="InterPro"/>
</dbReference>
<dbReference type="Gene3D" id="1.10.10.1000">
    <property type="entry name" value="Type III secretion system virulence factor YopR, core domain"/>
    <property type="match status" value="1"/>
</dbReference>
<dbReference type="InterPro" id="IPR013349">
    <property type="entry name" value="T3SS_YopR"/>
</dbReference>
<dbReference type="InterPro" id="IPR041814">
    <property type="entry name" value="YopR_core"/>
</dbReference>
<dbReference type="NCBIfam" id="TIGR02509">
    <property type="entry name" value="type_III_yopR"/>
    <property type="match status" value="1"/>
</dbReference>
<dbReference type="Pfam" id="PF09025">
    <property type="entry name" value="T3SS_needle_reg"/>
    <property type="match status" value="1"/>
</dbReference>
<dbReference type="SUPFAM" id="SSF140591">
    <property type="entry name" value="Type III secretion system domain"/>
    <property type="match status" value="1"/>
</dbReference>
<reference key="1">
    <citation type="journal article" date="1998" name="Infect. Immun.">
        <title>DNA sequencing and analysis of the low-Ca2+-response plasmid pCD1 of Yersinia pestis KIM5.</title>
        <authorList>
            <person name="Perry R.D."/>
            <person name="Straley S.C."/>
            <person name="Fetherston J.D."/>
            <person name="Rose D.J."/>
            <person name="Gregor J."/>
            <person name="Blattner F.R."/>
        </authorList>
    </citation>
    <scope>NUCLEOTIDE SEQUENCE [GENOMIC DNA]</scope>
    <source>
        <strain>KIM5 / Biovar Mediaevalis</strain>
    </source>
</reference>
<reference key="2">
    <citation type="journal article" date="1998" name="J. Bacteriol.">
        <title>Structural organization of virulence-associated plasmids of Yersinia pestis.</title>
        <authorList>
            <person name="Hu P."/>
            <person name="Elliott J."/>
            <person name="McCready P."/>
            <person name="Skowronski E."/>
            <person name="Garnes J."/>
            <person name="Kobayashi A."/>
            <person name="Brubaker R.R."/>
            <person name="Garcia E."/>
        </authorList>
    </citation>
    <scope>NUCLEOTIDE SEQUENCE [GENOMIC DNA]</scope>
    <source>
        <strain>KIM5 / Biovar Mediaevalis</strain>
    </source>
</reference>
<reference key="3">
    <citation type="journal article" date="2001" name="Nature">
        <title>Genome sequence of Yersinia pestis, the causative agent of plague.</title>
        <authorList>
            <person name="Parkhill J."/>
            <person name="Wren B.W."/>
            <person name="Thomson N.R."/>
            <person name="Titball R.W."/>
            <person name="Holden M.T.G."/>
            <person name="Prentice M.B."/>
            <person name="Sebaihia M."/>
            <person name="James K.D."/>
            <person name="Churcher C.M."/>
            <person name="Mungall K.L."/>
            <person name="Baker S."/>
            <person name="Basham D."/>
            <person name="Bentley S.D."/>
            <person name="Brooks K."/>
            <person name="Cerdeno-Tarraga A.-M."/>
            <person name="Chillingworth T."/>
            <person name="Cronin A."/>
            <person name="Davies R.M."/>
            <person name="Davis P."/>
            <person name="Dougan G."/>
            <person name="Feltwell T."/>
            <person name="Hamlin N."/>
            <person name="Holroyd S."/>
            <person name="Jagels K."/>
            <person name="Karlyshev A.V."/>
            <person name="Leather S."/>
            <person name="Moule S."/>
            <person name="Oyston P.C.F."/>
            <person name="Quail M.A."/>
            <person name="Rutherford K.M."/>
            <person name="Simmonds M."/>
            <person name="Skelton J."/>
            <person name="Stevens K."/>
            <person name="Whitehead S."/>
            <person name="Barrell B.G."/>
        </authorList>
    </citation>
    <scope>NUCLEOTIDE SEQUENCE [LARGE SCALE GENOMIC DNA]</scope>
    <source>
        <strain>CO-92 / Biovar Orientalis</strain>
    </source>
</reference>
<reference key="4">
    <citation type="journal article" date="2004" name="DNA Res.">
        <title>Complete genome sequence of Yersinia pestis strain 91001, an isolate avirulent to humans.</title>
        <authorList>
            <person name="Song Y."/>
            <person name="Tong Z."/>
            <person name="Wang J."/>
            <person name="Wang L."/>
            <person name="Guo Z."/>
            <person name="Han Y."/>
            <person name="Zhang J."/>
            <person name="Pei D."/>
            <person name="Zhou D."/>
            <person name="Qin H."/>
            <person name="Pang X."/>
            <person name="Han Y."/>
            <person name="Zhai J."/>
            <person name="Li M."/>
            <person name="Cui B."/>
            <person name="Qi Z."/>
            <person name="Jin L."/>
            <person name="Dai R."/>
            <person name="Chen F."/>
            <person name="Li S."/>
            <person name="Ye C."/>
            <person name="Du Z."/>
            <person name="Lin W."/>
            <person name="Wang J."/>
            <person name="Yu J."/>
            <person name="Yang H."/>
            <person name="Wang J."/>
            <person name="Huang P."/>
            <person name="Yang R."/>
        </authorList>
    </citation>
    <scope>NUCLEOTIDE SEQUENCE [LARGE SCALE GENOMIC DNA]</scope>
    <source>
        <strain>91001 / Biovar Mediaevalis</strain>
    </source>
</reference>
<reference key="5">
    <citation type="journal article" date="2010" name="Mol. Microbiol.">
        <title>YopR impacts type III needle polymerization in Yersinia species.</title>
        <authorList>
            <person name="Blaylock B."/>
            <person name="Berube B.J."/>
            <person name="Schneewind O."/>
        </authorList>
    </citation>
    <scope>FUNCTION</scope>
    <scope>DISRUPTION PHENOTYPE</scope>
    <source>
        <strain>KIM D27</strain>
    </source>
</reference>
<reference evidence="6" key="6">
    <citation type="journal article" date="2005" name="Protein Sci.">
        <title>Crystal structure of the protease-resistant core domain of Yersinia pestis virulence factor YopR.</title>
        <authorList>
            <person name="Schubot F.D."/>
            <person name="Cherry S."/>
            <person name="Austin B.P."/>
            <person name="Tropea J.E."/>
            <person name="Waugh D.S."/>
        </authorList>
    </citation>
    <scope>X-RAY CRYSTALLOGRAPHY (1.50 ANGSTROMS) OF 38-149</scope>
    <scope>DOMAIN</scope>
</reference>
<comment type="function">
    <text evidence="3">May be involved in the regulation of the assembly of the type III secretion system (T3SS), also called injectisome, which is used to inject bacterial effector proteins into eukaryotic host cells (PubMed:19968786). May control the secretion and/or polymerization of YscF/SctF, the principal component of the needle filament, thereby impacting the assembly of the T3SS (PubMed:19968786). Involved in pathogenesis (PubMed:19968786).</text>
</comment>
<comment type="interaction">
    <interactant intactId="EBI-2845098">
        <id>P68590</id>
    </interactant>
    <interactant intactId="EBI-447043">
        <id>Q15276</id>
        <label>RABEP1</label>
    </interactant>
    <organismsDiffer>true</organismsDiffer>
    <experiments>2</experiments>
</comment>
<comment type="subcellular location">
    <subcellularLocation>
        <location evidence="1">Secreted</location>
    </subcellularLocation>
    <text evidence="1">Secreted via the type III secretion system (T3SS).</text>
</comment>
<comment type="domain">
    <text evidence="2">The core domain is composed of five alpha-helices that display structural similarity with one domain of YopN/SctW, a central regulator of type III secretion in Y.pestis.</text>
</comment>
<comment type="disruption phenotype">
    <text evidence="3">Mutants lacking this gene are defective for virulence in a mouse model of septicemic plague.</text>
</comment>
<comment type="similarity">
    <text evidence="5">Belongs to the YopR family.</text>
</comment>